<reference key="1">
    <citation type="journal article" date="2007" name="Science">
        <title>The Calyptogena magnifica chemoautotrophic symbiont genome.</title>
        <authorList>
            <person name="Newton I.L.G."/>
            <person name="Woyke T."/>
            <person name="Auchtung T.A."/>
            <person name="Dilly G.F."/>
            <person name="Dutton R.J."/>
            <person name="Fisher M.C."/>
            <person name="Fontanez K.M."/>
            <person name="Lau E."/>
            <person name="Stewart F.J."/>
            <person name="Richardson P.M."/>
            <person name="Barry K.W."/>
            <person name="Saunders E."/>
            <person name="Detter J.C."/>
            <person name="Wu D."/>
            <person name="Eisen J.A."/>
            <person name="Cavanaugh C.M."/>
        </authorList>
    </citation>
    <scope>NUCLEOTIDE SEQUENCE [LARGE SCALE GENOMIC DNA]</scope>
</reference>
<accession>A1AV97</accession>
<name>RIMP_RUTMC</name>
<proteinExistence type="inferred from homology"/>
<feature type="chain" id="PRO_1000064763" description="Ribosome maturation factor RimP">
    <location>
        <begin position="1"/>
        <end position="154"/>
    </location>
</feature>
<evidence type="ECO:0000255" key="1">
    <source>
        <dbReference type="HAMAP-Rule" id="MF_01077"/>
    </source>
</evidence>
<keyword id="KW-0963">Cytoplasm</keyword>
<keyword id="KW-0690">Ribosome biogenesis</keyword>
<comment type="function">
    <text evidence="1">Required for maturation of 30S ribosomal subunits.</text>
</comment>
<comment type="subcellular location">
    <subcellularLocation>
        <location evidence="1">Cytoplasm</location>
    </subcellularLocation>
</comment>
<comment type="similarity">
    <text evidence="1">Belongs to the RimP family.</text>
</comment>
<gene>
    <name evidence="1" type="primary">rimP</name>
    <name type="ordered locus">Rmag_0052</name>
</gene>
<sequence length="154" mass="17427">MARVTDKITHLIELVIKDMCYELVGIEYVASGKHSILRVFIDTDKKGVGVNDCEKVSRQLSSIFDVEEPISGQYTLEVSSPGIERPLFHKEHYQRFLGANVKLRMVRPIDGRRNFFGVIGCVNEADNTFELVGELDLVILDIDLIEKANLVVDF</sequence>
<dbReference type="EMBL" id="CP000488">
    <property type="protein sequence ID" value="ABL01854.1"/>
    <property type="molecule type" value="Genomic_DNA"/>
</dbReference>
<dbReference type="RefSeq" id="WP_011737480.1">
    <property type="nucleotide sequence ID" value="NC_008610.1"/>
</dbReference>
<dbReference type="SMR" id="A1AV97"/>
<dbReference type="STRING" id="413404.Rmag_0052"/>
<dbReference type="KEGG" id="rma:Rmag_0052"/>
<dbReference type="eggNOG" id="COG0779">
    <property type="taxonomic scope" value="Bacteria"/>
</dbReference>
<dbReference type="HOGENOM" id="CLU_070525_1_1_6"/>
<dbReference type="OrthoDB" id="9805006at2"/>
<dbReference type="Proteomes" id="UP000002587">
    <property type="component" value="Chromosome"/>
</dbReference>
<dbReference type="GO" id="GO:0005829">
    <property type="term" value="C:cytosol"/>
    <property type="evidence" value="ECO:0007669"/>
    <property type="project" value="TreeGrafter"/>
</dbReference>
<dbReference type="GO" id="GO:0000028">
    <property type="term" value="P:ribosomal small subunit assembly"/>
    <property type="evidence" value="ECO:0007669"/>
    <property type="project" value="TreeGrafter"/>
</dbReference>
<dbReference type="GO" id="GO:0006412">
    <property type="term" value="P:translation"/>
    <property type="evidence" value="ECO:0007669"/>
    <property type="project" value="TreeGrafter"/>
</dbReference>
<dbReference type="CDD" id="cd01734">
    <property type="entry name" value="YlxS_C"/>
    <property type="match status" value="1"/>
</dbReference>
<dbReference type="FunFam" id="3.30.300.70:FF:000001">
    <property type="entry name" value="Ribosome maturation factor RimP"/>
    <property type="match status" value="1"/>
</dbReference>
<dbReference type="Gene3D" id="2.30.30.180">
    <property type="entry name" value="Ribosome maturation factor RimP, C-terminal domain"/>
    <property type="match status" value="1"/>
</dbReference>
<dbReference type="Gene3D" id="3.30.300.70">
    <property type="entry name" value="RimP-like superfamily, N-terminal"/>
    <property type="match status" value="1"/>
</dbReference>
<dbReference type="HAMAP" id="MF_01077">
    <property type="entry name" value="RimP"/>
    <property type="match status" value="1"/>
</dbReference>
<dbReference type="InterPro" id="IPR003728">
    <property type="entry name" value="Ribosome_maturation_RimP"/>
</dbReference>
<dbReference type="InterPro" id="IPR028998">
    <property type="entry name" value="RimP_C"/>
</dbReference>
<dbReference type="InterPro" id="IPR036847">
    <property type="entry name" value="RimP_C_sf"/>
</dbReference>
<dbReference type="InterPro" id="IPR028989">
    <property type="entry name" value="RimP_N"/>
</dbReference>
<dbReference type="InterPro" id="IPR035956">
    <property type="entry name" value="RimP_N_sf"/>
</dbReference>
<dbReference type="NCBIfam" id="NF000927">
    <property type="entry name" value="PRK00092.1-1"/>
    <property type="match status" value="1"/>
</dbReference>
<dbReference type="PANTHER" id="PTHR33867">
    <property type="entry name" value="RIBOSOME MATURATION FACTOR RIMP"/>
    <property type="match status" value="1"/>
</dbReference>
<dbReference type="PANTHER" id="PTHR33867:SF1">
    <property type="entry name" value="RIBOSOME MATURATION FACTOR RIMP"/>
    <property type="match status" value="1"/>
</dbReference>
<dbReference type="Pfam" id="PF17384">
    <property type="entry name" value="DUF150_C"/>
    <property type="match status" value="1"/>
</dbReference>
<dbReference type="Pfam" id="PF02576">
    <property type="entry name" value="RimP_N"/>
    <property type="match status" value="1"/>
</dbReference>
<dbReference type="SUPFAM" id="SSF74942">
    <property type="entry name" value="YhbC-like, C-terminal domain"/>
    <property type="match status" value="1"/>
</dbReference>
<dbReference type="SUPFAM" id="SSF75420">
    <property type="entry name" value="YhbC-like, N-terminal domain"/>
    <property type="match status" value="1"/>
</dbReference>
<protein>
    <recommendedName>
        <fullName evidence="1">Ribosome maturation factor RimP</fullName>
    </recommendedName>
</protein>
<organism>
    <name type="scientific">Ruthia magnifica subsp. Calyptogena magnifica</name>
    <dbReference type="NCBI Taxonomy" id="413404"/>
    <lineage>
        <taxon>Bacteria</taxon>
        <taxon>Pseudomonadati</taxon>
        <taxon>Pseudomonadota</taxon>
        <taxon>Gammaproteobacteria</taxon>
        <taxon>Candidatus Pseudothioglobaceae</taxon>
        <taxon>Candidatus Ruthturnera</taxon>
    </lineage>
</organism>